<keyword id="KW-0378">Hydrolase</keyword>
<keyword id="KW-0479">Metal-binding</keyword>
<keyword id="KW-0482">Metalloprotease</keyword>
<keyword id="KW-0576">Peroxisome</keyword>
<keyword id="KW-0645">Protease</keyword>
<keyword id="KW-1185">Reference proteome</keyword>
<keyword id="KW-0862">Zinc</keyword>
<dbReference type="EC" id="3.4.24.-"/>
<dbReference type="EMBL" id="AC002339">
    <property type="protein sequence ID" value="AAC02769.1"/>
    <property type="molecule type" value="Genomic_DNA"/>
</dbReference>
<dbReference type="EMBL" id="CP002685">
    <property type="protein sequence ID" value="AEC10033.1"/>
    <property type="molecule type" value="Genomic_DNA"/>
</dbReference>
<dbReference type="EMBL" id="AK226643">
    <property type="protein sequence ID" value="BAE98754.1"/>
    <property type="molecule type" value="mRNA"/>
</dbReference>
<dbReference type="PIR" id="B84846">
    <property type="entry name" value="B84846"/>
</dbReference>
<dbReference type="RefSeq" id="NP_181710.1">
    <property type="nucleotide sequence ID" value="NM_129743.4"/>
</dbReference>
<dbReference type="SMR" id="O22941"/>
<dbReference type="FunCoup" id="O22941">
    <property type="interactions" value="3992"/>
</dbReference>
<dbReference type="IntAct" id="O22941">
    <property type="interactions" value="1"/>
</dbReference>
<dbReference type="STRING" id="3702.O22941"/>
<dbReference type="MEROPS" id="M16.A02"/>
<dbReference type="GlyGen" id="O22941">
    <property type="glycosylation" value="1 site"/>
</dbReference>
<dbReference type="iPTMnet" id="O22941"/>
<dbReference type="PaxDb" id="3702-AT2G41790.1"/>
<dbReference type="ProteomicsDB" id="228791"/>
<dbReference type="EnsemblPlants" id="AT2G41790.1">
    <property type="protein sequence ID" value="AT2G41790.1"/>
    <property type="gene ID" value="AT2G41790"/>
</dbReference>
<dbReference type="GeneID" id="818778"/>
<dbReference type="Gramene" id="AT2G41790.1">
    <property type="protein sequence ID" value="AT2G41790.1"/>
    <property type="gene ID" value="AT2G41790"/>
</dbReference>
<dbReference type="KEGG" id="ath:AT2G41790"/>
<dbReference type="Araport" id="AT2G41790"/>
<dbReference type="TAIR" id="AT2G41790"/>
<dbReference type="eggNOG" id="KOG0959">
    <property type="taxonomic scope" value="Eukaryota"/>
</dbReference>
<dbReference type="HOGENOM" id="CLU_004639_1_1_1"/>
<dbReference type="InParanoid" id="O22941"/>
<dbReference type="OMA" id="WIFDEMK"/>
<dbReference type="OrthoDB" id="952271at2759"/>
<dbReference type="PhylomeDB" id="O22941"/>
<dbReference type="PRO" id="PR:O22941"/>
<dbReference type="Proteomes" id="UP000006548">
    <property type="component" value="Chromosome 2"/>
</dbReference>
<dbReference type="ExpressionAtlas" id="O22941">
    <property type="expression patterns" value="baseline and differential"/>
</dbReference>
<dbReference type="GO" id="GO:0005829">
    <property type="term" value="C:cytosol"/>
    <property type="evidence" value="ECO:0007005"/>
    <property type="project" value="TAIR"/>
</dbReference>
<dbReference type="GO" id="GO:0005777">
    <property type="term" value="C:peroxisome"/>
    <property type="evidence" value="ECO:0007669"/>
    <property type="project" value="UniProtKB-SubCell"/>
</dbReference>
<dbReference type="GO" id="GO:0046872">
    <property type="term" value="F:metal ion binding"/>
    <property type="evidence" value="ECO:0007669"/>
    <property type="project" value="UniProtKB-KW"/>
</dbReference>
<dbReference type="GO" id="GO:0004222">
    <property type="term" value="F:metalloendopeptidase activity"/>
    <property type="evidence" value="ECO:0007669"/>
    <property type="project" value="InterPro"/>
</dbReference>
<dbReference type="GO" id="GO:0006508">
    <property type="term" value="P:proteolysis"/>
    <property type="evidence" value="ECO:0007669"/>
    <property type="project" value="UniProtKB-KW"/>
</dbReference>
<dbReference type="FunFam" id="3.30.830.10:FF:000003">
    <property type="entry name" value="Insulin-degrading enzyme"/>
    <property type="match status" value="1"/>
</dbReference>
<dbReference type="FunFam" id="3.30.830.10:FF:000028">
    <property type="entry name" value="Insulin-degrading enzyme-like 1 peroxisomal"/>
    <property type="match status" value="1"/>
</dbReference>
<dbReference type="FunFam" id="3.30.830.10:FF:000005">
    <property type="entry name" value="nardilysin isoform X1"/>
    <property type="match status" value="1"/>
</dbReference>
<dbReference type="FunFam" id="3.30.830.10:FF:000004">
    <property type="entry name" value="Putative insulin-degrading enzyme"/>
    <property type="match status" value="1"/>
</dbReference>
<dbReference type="Gene3D" id="3.30.830.10">
    <property type="entry name" value="Metalloenzyme, LuxS/M16 peptidase-like"/>
    <property type="match status" value="4"/>
</dbReference>
<dbReference type="InterPro" id="IPR011249">
    <property type="entry name" value="Metalloenz_LuxS/M16"/>
</dbReference>
<dbReference type="InterPro" id="IPR011765">
    <property type="entry name" value="Pept_M16_N"/>
</dbReference>
<dbReference type="InterPro" id="IPR001431">
    <property type="entry name" value="Pept_M16_Zn_BS"/>
</dbReference>
<dbReference type="InterPro" id="IPR050626">
    <property type="entry name" value="Peptidase_M16"/>
</dbReference>
<dbReference type="InterPro" id="IPR007863">
    <property type="entry name" value="Peptidase_M16_C"/>
</dbReference>
<dbReference type="InterPro" id="IPR032632">
    <property type="entry name" value="Peptidase_M16_M"/>
</dbReference>
<dbReference type="InterPro" id="IPR054734">
    <property type="entry name" value="PqqF-like_C_4"/>
</dbReference>
<dbReference type="PANTHER" id="PTHR43690:SF18">
    <property type="entry name" value="INSULIN-DEGRADING ENZYME-RELATED"/>
    <property type="match status" value="1"/>
</dbReference>
<dbReference type="PANTHER" id="PTHR43690">
    <property type="entry name" value="NARDILYSIN"/>
    <property type="match status" value="1"/>
</dbReference>
<dbReference type="Pfam" id="PF00675">
    <property type="entry name" value="Peptidase_M16"/>
    <property type="match status" value="1"/>
</dbReference>
<dbReference type="Pfam" id="PF05193">
    <property type="entry name" value="Peptidase_M16_C"/>
    <property type="match status" value="1"/>
</dbReference>
<dbReference type="Pfam" id="PF16187">
    <property type="entry name" value="Peptidase_M16_M"/>
    <property type="match status" value="1"/>
</dbReference>
<dbReference type="Pfam" id="PF22456">
    <property type="entry name" value="PqqF-like_C_4"/>
    <property type="match status" value="1"/>
</dbReference>
<dbReference type="SUPFAM" id="SSF63411">
    <property type="entry name" value="LuxS/MPP-like metallohydrolase"/>
    <property type="match status" value="4"/>
</dbReference>
<dbReference type="PROSITE" id="PS00143">
    <property type="entry name" value="INSULINASE"/>
    <property type="match status" value="1"/>
</dbReference>
<name>IDE1_ARATH</name>
<comment type="function">
    <text evidence="5">Peptidase that might be involved in pathogen or wound response. Not required for peroxisome biogenesis, indole-3-butyric acid (IBA) metabolism, fatty acid beta-oxidation or degradation of glyoxylate cycle enzymes during seedling development.</text>
</comment>
<comment type="cofactor">
    <cofactor evidence="1">
        <name>Zn(2+)</name>
        <dbReference type="ChEBI" id="CHEBI:29105"/>
    </cofactor>
    <text evidence="1">Binds 1 zinc ion per subunit.</text>
</comment>
<comment type="subcellular location">
    <subcellularLocation>
        <location evidence="3">Peroxisome</location>
    </subcellularLocation>
</comment>
<comment type="disruption phenotype">
    <text evidence="4 5">No visible phenotype, and full processing of glyoxysomal precursor proteins.</text>
</comment>
<comment type="similarity">
    <text evidence="6">Belongs to the peptidase M16 family.</text>
</comment>
<evidence type="ECO:0000250" key="1"/>
<evidence type="ECO:0000255" key="2">
    <source>
        <dbReference type="PROSITE-ProRule" id="PRU10096"/>
    </source>
</evidence>
<evidence type="ECO:0000269" key="3">
    <source>
    </source>
</evidence>
<evidence type="ECO:0000269" key="4">
    <source>
    </source>
</evidence>
<evidence type="ECO:0000269" key="5">
    <source>
    </source>
</evidence>
<evidence type="ECO:0000305" key="6"/>
<evidence type="ECO:0000312" key="7">
    <source>
        <dbReference type="Araport" id="AT2G41790"/>
    </source>
</evidence>
<evidence type="ECO:0000312" key="8">
    <source>
        <dbReference type="EMBL" id="AAC02769.1"/>
    </source>
</evidence>
<accession>O22941</accession>
<accession>Q0WVU4</accession>
<reference key="1">
    <citation type="journal article" date="1999" name="Nature">
        <title>Sequence and analysis of chromosome 2 of the plant Arabidopsis thaliana.</title>
        <authorList>
            <person name="Lin X."/>
            <person name="Kaul S."/>
            <person name="Rounsley S.D."/>
            <person name="Shea T.P."/>
            <person name="Benito M.-I."/>
            <person name="Town C.D."/>
            <person name="Fujii C.Y."/>
            <person name="Mason T.M."/>
            <person name="Bowman C.L."/>
            <person name="Barnstead M.E."/>
            <person name="Feldblyum T.V."/>
            <person name="Buell C.R."/>
            <person name="Ketchum K.A."/>
            <person name="Lee J.J."/>
            <person name="Ronning C.M."/>
            <person name="Koo H.L."/>
            <person name="Moffat K.S."/>
            <person name="Cronin L.A."/>
            <person name="Shen M."/>
            <person name="Pai G."/>
            <person name="Van Aken S."/>
            <person name="Umayam L."/>
            <person name="Tallon L.J."/>
            <person name="Gill J.E."/>
            <person name="Adams M.D."/>
            <person name="Carrera A.J."/>
            <person name="Creasy T.H."/>
            <person name="Goodman H.M."/>
            <person name="Somerville C.R."/>
            <person name="Copenhaver G.P."/>
            <person name="Preuss D."/>
            <person name="Nierman W.C."/>
            <person name="White O."/>
            <person name="Eisen J.A."/>
            <person name="Salzberg S.L."/>
            <person name="Fraser C.M."/>
            <person name="Venter J.C."/>
        </authorList>
    </citation>
    <scope>NUCLEOTIDE SEQUENCE [LARGE SCALE GENOMIC DNA]</scope>
    <source>
        <strain>cv. Columbia</strain>
    </source>
</reference>
<reference key="2">
    <citation type="journal article" date="2017" name="Plant J.">
        <title>Araport11: a complete reannotation of the Arabidopsis thaliana reference genome.</title>
        <authorList>
            <person name="Cheng C.Y."/>
            <person name="Krishnakumar V."/>
            <person name="Chan A.P."/>
            <person name="Thibaud-Nissen F."/>
            <person name="Schobel S."/>
            <person name="Town C.D."/>
        </authorList>
    </citation>
    <scope>GENOME REANNOTATION</scope>
    <source>
        <strain>cv. Columbia</strain>
    </source>
</reference>
<reference key="3">
    <citation type="submission" date="2006-07" db="EMBL/GenBank/DDBJ databases">
        <title>Large-scale analysis of RIKEN Arabidopsis full-length (RAFL) cDNAs.</title>
        <authorList>
            <person name="Totoki Y."/>
            <person name="Seki M."/>
            <person name="Ishida J."/>
            <person name="Nakajima M."/>
            <person name="Enju A."/>
            <person name="Kamiya A."/>
            <person name="Narusaka M."/>
            <person name="Shin-i T."/>
            <person name="Nakagawa M."/>
            <person name="Sakamoto N."/>
            <person name="Oishi K."/>
            <person name="Kohara Y."/>
            <person name="Kobayashi M."/>
            <person name="Toyoda A."/>
            <person name="Sakaki Y."/>
            <person name="Sakurai T."/>
            <person name="Iida K."/>
            <person name="Akiyama K."/>
            <person name="Satou M."/>
            <person name="Toyoda T."/>
            <person name="Konagaya A."/>
            <person name="Carninci P."/>
            <person name="Kawai J."/>
            <person name="Hayashizaki Y."/>
            <person name="Shinozaki K."/>
        </authorList>
    </citation>
    <scope>NUCLEOTIDE SEQUENCE [LARGE SCALE MRNA]</scope>
    <source>
        <strain>cv. Columbia</strain>
    </source>
</reference>
<reference key="4">
    <citation type="journal article" date="2004" name="Plant Physiol.">
        <title>AraPerox. A database of putative Arabidopsis proteins from plant peroxisomes.</title>
        <authorList>
            <person name="Reumann S."/>
            <person name="Ma C."/>
            <person name="Lemke S."/>
            <person name="Babujee L."/>
        </authorList>
    </citation>
    <scope>SUBCELLULAR LOCATION</scope>
</reference>
<reference key="5">
    <citation type="journal article" date="2007" name="Proc. Natl. Acad. Sci. U.S.A.">
        <title>Dual specificities of the glyoxysomal/peroxisomal processing protease Deg15 in higher plants.</title>
        <authorList>
            <person name="Helm M."/>
            <person name="Lueck C."/>
            <person name="Prestele J."/>
            <person name="Hierl G."/>
            <person name="Huesgen P.F."/>
            <person name="Froehlich T."/>
            <person name="Arnold G.J."/>
            <person name="Adamska I."/>
            <person name="Goerg A."/>
            <person name="Lottspeich F."/>
            <person name="Gietl C."/>
        </authorList>
    </citation>
    <scope>DISRUPTION PHENOTYPE</scope>
</reference>
<reference key="6">
    <citation type="journal article" date="2009" name="Plant Physiol.">
        <title>Arabidopsis LON2 is necessary for peroxisomal function and sustained matrix protein import.</title>
        <authorList>
            <person name="Lingard M.J."/>
            <person name="Bartel B."/>
        </authorList>
    </citation>
    <scope>FUNCTION</scope>
    <scope>DISRUPTION PHENOTYPE</scope>
</reference>
<protein>
    <recommendedName>
        <fullName>Insulin-degrading enzyme-like 1, peroxisomal</fullName>
        <ecNumber>3.4.24.-</ecNumber>
    </recommendedName>
    <alternativeName>
        <fullName>Insulysin-like 1</fullName>
    </alternativeName>
    <alternativeName>
        <fullName>Peroxisomal M16 protease</fullName>
    </alternativeName>
    <alternativeName>
        <fullName>Zinc-metallopeptidase</fullName>
    </alternativeName>
</protein>
<feature type="chain" id="PRO_0000403450" description="Insulin-degrading enzyme-like 1, peroxisomal">
    <location>
        <begin position="1"/>
        <end position="970"/>
    </location>
</feature>
<feature type="active site" description="Proton acceptor" evidence="2">
    <location>
        <position position="72"/>
    </location>
</feature>
<feature type="active site" evidence="6">
    <location>
        <position position="143"/>
    </location>
</feature>
<feature type="binding site" evidence="2">
    <location>
        <position position="69"/>
    </location>
    <ligand>
        <name>Zn(2+)</name>
        <dbReference type="ChEBI" id="CHEBI:29105"/>
    </ligand>
</feature>
<feature type="binding site" evidence="2">
    <location>
        <position position="73"/>
    </location>
    <ligand>
        <name>Zn(2+)</name>
        <dbReference type="ChEBI" id="CHEBI:29105"/>
    </ligand>
</feature>
<feature type="binding site" evidence="6">
    <location>
        <position position="150"/>
    </location>
    <ligand>
        <name>Zn(2+)</name>
        <dbReference type="ChEBI" id="CHEBI:29105"/>
    </ligand>
</feature>
<feature type="sequence conflict" description="In Ref. 3; BAE98754." evidence="6" ref="3">
    <original>H</original>
    <variation>R</variation>
    <location>
        <position position="725"/>
    </location>
</feature>
<sequence>MAVEKSNTTVGGVEILKPRTDNREYRMIVLKNLLQVLLISDPDTDKCAASMSVSVGSFSDPQGLEGLAHFLEHMLFYASEKYPEEDSYSKYITEHGGSTNAYTASEETNYHFDVNADCFDEALDRFAQFFIKPLMSADATMREIKAVDSENQKNLLSDGWRIRQLQKHLSKEDHPYHKFSTGNMDTLHVRPQAKGVDTRSELIKFYEEHYSANIMHLVVYGKESLDKIQDLVERMFQEIQNTNKVVPRFPGQPCTADHLQILVKAIPIKQGHKLGVSWPVTPSIHHYDEAPSQYLGHLIGHEGEGSLFHALKTLGWATGLSAGEGEWTLDYSFFKVSIDLTDAGHEHMQEILGLLFNYIQLLQQTGVCQWIFDELSAICETKFHYQDKIPPMSYIVDIASNMQIYPTKDWLVGSSLPTKFNPAIVQKVVDELSPSNFRIFWESQKFEGQTDKAEPWYNTAYSLEKITSSTIQEWVQSAPDVHLHLPAPNVFIPTDLSLKDADDKETVPVLLRKTPFSRLWYKPDTMFSKPKAYVKMDFNCPLAVSSPDAAVLTDIFTRLLMDYLNEYAYYAQVAGLYYGVSLSDNGFELTLLGYNHKLRILLETVVGKIANFEVKPDRFAVIKETVTKEYQNYKFRQPYHQAMYYCSLILQDQTWPWTEELDVLSHLEAEDVAKFVPMLLSRTFIECYIAGNVENNEAESMVKHIEDVLFNDPKPICRPLFPSQHLTNRVVKLGEGMKYFYHQDGSNPSDENSALVHYIQVHRDDFSMNIKLQLFGLVAKQATFHQLRTVEQLGYITALAQRNDSGIYGVQFIIQSSVKGPGHIDSRVESLLKNFESKLYEMSNEDFKSNVTALIDMKLEKHKNLKEESRFYWREIQSGTLKFNRKEAEVSALKQLQKQELIDFFDEYIKVGAARKKSLSIRVYGSQHLKEMASDKDEVPSPSVEIEDIVGFRKSQPLHGSFRGCGQPKL</sequence>
<gene>
    <name type="primary">PXM16</name>
    <name evidence="7" type="ordered locus">At2g41790</name>
    <name evidence="8" type="ORF">T11A7.11</name>
</gene>
<organism>
    <name type="scientific">Arabidopsis thaliana</name>
    <name type="common">Mouse-ear cress</name>
    <dbReference type="NCBI Taxonomy" id="3702"/>
    <lineage>
        <taxon>Eukaryota</taxon>
        <taxon>Viridiplantae</taxon>
        <taxon>Streptophyta</taxon>
        <taxon>Embryophyta</taxon>
        <taxon>Tracheophyta</taxon>
        <taxon>Spermatophyta</taxon>
        <taxon>Magnoliopsida</taxon>
        <taxon>eudicotyledons</taxon>
        <taxon>Gunneridae</taxon>
        <taxon>Pentapetalae</taxon>
        <taxon>rosids</taxon>
        <taxon>malvids</taxon>
        <taxon>Brassicales</taxon>
        <taxon>Brassicaceae</taxon>
        <taxon>Camelineae</taxon>
        <taxon>Arabidopsis</taxon>
    </lineage>
</organism>
<proteinExistence type="evidence at transcript level"/>